<comment type="function">
    <text evidence="1">Transfers and isomerizes the ribose moiety from AdoMet to the 7-aminomethyl group of 7-deazaguanine (preQ1-tRNA) to give epoxyqueuosine (oQ-tRNA).</text>
</comment>
<comment type="catalytic activity">
    <reaction evidence="1">
        <text>7-aminomethyl-7-carbaguanosine(34) in tRNA + S-adenosyl-L-methionine = epoxyqueuosine(34) in tRNA + adenine + L-methionine + 2 H(+)</text>
        <dbReference type="Rhea" id="RHEA:32155"/>
        <dbReference type="Rhea" id="RHEA-COMP:10342"/>
        <dbReference type="Rhea" id="RHEA-COMP:18582"/>
        <dbReference type="ChEBI" id="CHEBI:15378"/>
        <dbReference type="ChEBI" id="CHEBI:16708"/>
        <dbReference type="ChEBI" id="CHEBI:57844"/>
        <dbReference type="ChEBI" id="CHEBI:59789"/>
        <dbReference type="ChEBI" id="CHEBI:82833"/>
        <dbReference type="ChEBI" id="CHEBI:194443"/>
        <dbReference type="EC" id="2.4.99.17"/>
    </reaction>
</comment>
<comment type="pathway">
    <text evidence="1">tRNA modification; tRNA-queuosine biosynthesis.</text>
</comment>
<comment type="subunit">
    <text evidence="1">Monomer.</text>
</comment>
<comment type="subcellular location">
    <subcellularLocation>
        <location evidence="1">Cytoplasm</location>
    </subcellularLocation>
</comment>
<comment type="similarity">
    <text evidence="1">Belongs to the QueA family.</text>
</comment>
<gene>
    <name evidence="1" type="primary">queA</name>
    <name type="ordered locus">CD630_28040</name>
</gene>
<reference key="1">
    <citation type="journal article" date="2006" name="Nat. Genet.">
        <title>The multidrug-resistant human pathogen Clostridium difficile has a highly mobile, mosaic genome.</title>
        <authorList>
            <person name="Sebaihia M."/>
            <person name="Wren B.W."/>
            <person name="Mullany P."/>
            <person name="Fairweather N.F."/>
            <person name="Minton N."/>
            <person name="Stabler R."/>
            <person name="Thomson N.R."/>
            <person name="Roberts A.P."/>
            <person name="Cerdeno-Tarraga A.M."/>
            <person name="Wang H."/>
            <person name="Holden M.T.G."/>
            <person name="Wright A."/>
            <person name="Churcher C."/>
            <person name="Quail M.A."/>
            <person name="Baker S."/>
            <person name="Bason N."/>
            <person name="Brooks K."/>
            <person name="Chillingworth T."/>
            <person name="Cronin A."/>
            <person name="Davis P."/>
            <person name="Dowd L."/>
            <person name="Fraser A."/>
            <person name="Feltwell T."/>
            <person name="Hance Z."/>
            <person name="Holroyd S."/>
            <person name="Jagels K."/>
            <person name="Moule S."/>
            <person name="Mungall K."/>
            <person name="Price C."/>
            <person name="Rabbinowitsch E."/>
            <person name="Sharp S."/>
            <person name="Simmonds M."/>
            <person name="Stevens K."/>
            <person name="Unwin L."/>
            <person name="Whithead S."/>
            <person name="Dupuy B."/>
            <person name="Dougan G."/>
            <person name="Barrell B."/>
            <person name="Parkhill J."/>
        </authorList>
    </citation>
    <scope>NUCLEOTIDE SEQUENCE [LARGE SCALE GENOMIC DNA]</scope>
    <source>
        <strain>630</strain>
    </source>
</reference>
<organism>
    <name type="scientific">Clostridioides difficile (strain 630)</name>
    <name type="common">Peptoclostridium difficile</name>
    <dbReference type="NCBI Taxonomy" id="272563"/>
    <lineage>
        <taxon>Bacteria</taxon>
        <taxon>Bacillati</taxon>
        <taxon>Bacillota</taxon>
        <taxon>Clostridia</taxon>
        <taxon>Peptostreptococcales</taxon>
        <taxon>Peptostreptococcaceae</taxon>
        <taxon>Clostridioides</taxon>
    </lineage>
</organism>
<dbReference type="EC" id="2.4.99.17" evidence="1"/>
<dbReference type="EMBL" id="AM180355">
    <property type="protein sequence ID" value="CAJ69692.1"/>
    <property type="molecule type" value="Genomic_DNA"/>
</dbReference>
<dbReference type="RefSeq" id="WP_011861694.1">
    <property type="nucleotide sequence ID" value="NZ_JAUPES010000033.1"/>
</dbReference>
<dbReference type="RefSeq" id="YP_001089317.1">
    <property type="nucleotide sequence ID" value="NC_009089.1"/>
</dbReference>
<dbReference type="SMR" id="Q183N9"/>
<dbReference type="STRING" id="272563.CD630_28040"/>
<dbReference type="EnsemblBacteria" id="CAJ69692">
    <property type="protein sequence ID" value="CAJ69692"/>
    <property type="gene ID" value="CD630_28040"/>
</dbReference>
<dbReference type="KEGG" id="cdf:CD630_28040"/>
<dbReference type="KEGG" id="pdc:CDIF630_03069"/>
<dbReference type="PATRIC" id="fig|272563.120.peg.2953"/>
<dbReference type="eggNOG" id="COG0809">
    <property type="taxonomic scope" value="Bacteria"/>
</dbReference>
<dbReference type="OrthoDB" id="9805933at2"/>
<dbReference type="PhylomeDB" id="Q183N9"/>
<dbReference type="BioCyc" id="MetaCyc:G12WB-2964-MONOMER"/>
<dbReference type="BioCyc" id="PDIF272563:G12WB-2964-MONOMER"/>
<dbReference type="UniPathway" id="UPA00392"/>
<dbReference type="Proteomes" id="UP000001978">
    <property type="component" value="Chromosome"/>
</dbReference>
<dbReference type="GO" id="GO:0005737">
    <property type="term" value="C:cytoplasm"/>
    <property type="evidence" value="ECO:0007669"/>
    <property type="project" value="UniProtKB-SubCell"/>
</dbReference>
<dbReference type="GO" id="GO:0051075">
    <property type="term" value="F:S-adenosylmethionine:tRNA ribosyltransferase-isomerase activity"/>
    <property type="evidence" value="ECO:0007669"/>
    <property type="project" value="UniProtKB-EC"/>
</dbReference>
<dbReference type="GO" id="GO:0008616">
    <property type="term" value="P:queuosine biosynthetic process"/>
    <property type="evidence" value="ECO:0007669"/>
    <property type="project" value="UniProtKB-UniRule"/>
</dbReference>
<dbReference type="GO" id="GO:0002099">
    <property type="term" value="P:tRNA wobble guanine modification"/>
    <property type="evidence" value="ECO:0007669"/>
    <property type="project" value="TreeGrafter"/>
</dbReference>
<dbReference type="FunFam" id="2.40.10.240:FF:000002">
    <property type="entry name" value="S-adenosylmethionine:tRNA ribosyltransferase-isomerase"/>
    <property type="match status" value="1"/>
</dbReference>
<dbReference type="FunFam" id="3.40.1780.10:FF:000001">
    <property type="entry name" value="S-adenosylmethionine:tRNA ribosyltransferase-isomerase"/>
    <property type="match status" value="1"/>
</dbReference>
<dbReference type="Gene3D" id="2.40.10.240">
    <property type="entry name" value="QueA-like"/>
    <property type="match status" value="1"/>
</dbReference>
<dbReference type="Gene3D" id="3.40.1780.10">
    <property type="entry name" value="QueA-like"/>
    <property type="match status" value="1"/>
</dbReference>
<dbReference type="HAMAP" id="MF_00113">
    <property type="entry name" value="QueA"/>
    <property type="match status" value="1"/>
</dbReference>
<dbReference type="InterPro" id="IPR003699">
    <property type="entry name" value="QueA"/>
</dbReference>
<dbReference type="InterPro" id="IPR042118">
    <property type="entry name" value="QueA_dom1"/>
</dbReference>
<dbReference type="InterPro" id="IPR042119">
    <property type="entry name" value="QueA_dom2"/>
</dbReference>
<dbReference type="InterPro" id="IPR036100">
    <property type="entry name" value="QueA_sf"/>
</dbReference>
<dbReference type="NCBIfam" id="NF001140">
    <property type="entry name" value="PRK00147.1"/>
    <property type="match status" value="1"/>
</dbReference>
<dbReference type="NCBIfam" id="TIGR00113">
    <property type="entry name" value="queA"/>
    <property type="match status" value="1"/>
</dbReference>
<dbReference type="PANTHER" id="PTHR30307">
    <property type="entry name" value="S-ADENOSYLMETHIONINE:TRNA RIBOSYLTRANSFERASE-ISOMERASE"/>
    <property type="match status" value="1"/>
</dbReference>
<dbReference type="PANTHER" id="PTHR30307:SF0">
    <property type="entry name" value="S-ADENOSYLMETHIONINE:TRNA RIBOSYLTRANSFERASE-ISOMERASE"/>
    <property type="match status" value="1"/>
</dbReference>
<dbReference type="Pfam" id="PF02547">
    <property type="entry name" value="Queuosine_synth"/>
    <property type="match status" value="1"/>
</dbReference>
<dbReference type="SUPFAM" id="SSF111337">
    <property type="entry name" value="QueA-like"/>
    <property type="match status" value="1"/>
</dbReference>
<proteinExistence type="inferred from homology"/>
<sequence>MKTRDFKFDLPQELIAQVPIEDRASSRLMVLDKETGNIEHKVFRDIIEYLNPGDCLVLNNTRVIPARLIGEKLETGGKIEFLLLKRTEEDTWQALVKPGKRAKVGTKFSFGNGKLIGEVVDLSDEGSRIIKFHYDGIFEEILDELGNMPLPPYITARLDEKERYQTVYSKHNGSAAAPTAGLHFTEELLNKIKEKGVDIAFVTLHVGLGTFRPVKVEDVLNHKMHSEYYMVSQEAADKINRAKENGKNVICVGTTSCRTIESACNEDGKMKETSGWTEIFIYPGYKFKVLDKLITNFHLPESTLIMLVSAICGKDNVLNAYNEAVKERYRFFSFGDAMIIK</sequence>
<feature type="chain" id="PRO_1000015201" description="S-adenosylmethionine:tRNA ribosyltransferase-isomerase">
    <location>
        <begin position="1"/>
        <end position="341"/>
    </location>
</feature>
<protein>
    <recommendedName>
        <fullName evidence="1">S-adenosylmethionine:tRNA ribosyltransferase-isomerase</fullName>
        <ecNumber evidence="1">2.4.99.17</ecNumber>
    </recommendedName>
    <alternativeName>
        <fullName evidence="1">Queuosine biosynthesis protein QueA</fullName>
    </alternativeName>
</protein>
<name>QUEA_CLOD6</name>
<evidence type="ECO:0000255" key="1">
    <source>
        <dbReference type="HAMAP-Rule" id="MF_00113"/>
    </source>
</evidence>
<keyword id="KW-0963">Cytoplasm</keyword>
<keyword id="KW-0671">Queuosine biosynthesis</keyword>
<keyword id="KW-1185">Reference proteome</keyword>
<keyword id="KW-0949">S-adenosyl-L-methionine</keyword>
<keyword id="KW-0808">Transferase</keyword>
<accession>Q183N9</accession>